<organism>
    <name type="scientific">Bacillus anthracis</name>
    <dbReference type="NCBI Taxonomy" id="1392"/>
    <lineage>
        <taxon>Bacteria</taxon>
        <taxon>Bacillati</taxon>
        <taxon>Bacillota</taxon>
        <taxon>Bacilli</taxon>
        <taxon>Bacillales</taxon>
        <taxon>Bacillaceae</taxon>
        <taxon>Bacillus</taxon>
        <taxon>Bacillus cereus group</taxon>
    </lineage>
</organism>
<comment type="similarity">
    <text evidence="2">Belongs to the LysR transcriptional regulatory family.</text>
</comment>
<protein>
    <recommendedName>
        <fullName>HTH-type transcriptional regulator CzcR</fullName>
    </recommendedName>
</protein>
<keyword id="KW-0238">DNA-binding</keyword>
<keyword id="KW-1185">Reference proteome</keyword>
<keyword id="KW-0804">Transcription</keyword>
<keyword id="KW-0805">Transcription regulation</keyword>
<dbReference type="EMBL" id="AE016879">
    <property type="protein sequence ID" value="AAP24255.1"/>
    <property type="molecule type" value="Genomic_DNA"/>
</dbReference>
<dbReference type="EMBL" id="AE017334">
    <property type="protein sequence ID" value="AAT29292.1"/>
    <property type="molecule type" value="Genomic_DNA"/>
</dbReference>
<dbReference type="EMBL" id="AE017225">
    <property type="protein sequence ID" value="AAT52541.1"/>
    <property type="molecule type" value="Genomic_DNA"/>
</dbReference>
<dbReference type="RefSeq" id="NP_842769.1">
    <property type="nucleotide sequence ID" value="NC_003997.3"/>
</dbReference>
<dbReference type="RefSeq" id="WP_000423056.1">
    <property type="nucleotide sequence ID" value="NZ_WXXJ01000014.1"/>
</dbReference>
<dbReference type="RefSeq" id="YP_026490.1">
    <property type="nucleotide sequence ID" value="NC_005945.1"/>
</dbReference>
<dbReference type="SMR" id="Q81VJ1"/>
<dbReference type="STRING" id="261594.GBAA_0208"/>
<dbReference type="DNASU" id="1086828"/>
<dbReference type="GeneID" id="45020257"/>
<dbReference type="KEGG" id="ban:BA_0208"/>
<dbReference type="KEGG" id="bar:GBAA_0208"/>
<dbReference type="KEGG" id="bat:BAS0205"/>
<dbReference type="PATRIC" id="fig|198094.11.peg.205"/>
<dbReference type="eggNOG" id="COG0583">
    <property type="taxonomic scope" value="Bacteria"/>
</dbReference>
<dbReference type="HOGENOM" id="CLU_039613_6_1_9"/>
<dbReference type="OMA" id="MEIESYQ"/>
<dbReference type="OrthoDB" id="8479357at2"/>
<dbReference type="Proteomes" id="UP000000427">
    <property type="component" value="Chromosome"/>
</dbReference>
<dbReference type="Proteomes" id="UP000000594">
    <property type="component" value="Chromosome"/>
</dbReference>
<dbReference type="GO" id="GO:0003700">
    <property type="term" value="F:DNA-binding transcription factor activity"/>
    <property type="evidence" value="ECO:0007669"/>
    <property type="project" value="InterPro"/>
</dbReference>
<dbReference type="GO" id="GO:0000976">
    <property type="term" value="F:transcription cis-regulatory region binding"/>
    <property type="evidence" value="ECO:0007669"/>
    <property type="project" value="TreeGrafter"/>
</dbReference>
<dbReference type="CDD" id="cd08442">
    <property type="entry name" value="PBP2_YofA_SoxR_like"/>
    <property type="match status" value="1"/>
</dbReference>
<dbReference type="FunFam" id="1.10.10.10:FF:000001">
    <property type="entry name" value="LysR family transcriptional regulator"/>
    <property type="match status" value="1"/>
</dbReference>
<dbReference type="Gene3D" id="3.40.190.290">
    <property type="match status" value="1"/>
</dbReference>
<dbReference type="Gene3D" id="1.10.10.10">
    <property type="entry name" value="Winged helix-like DNA-binding domain superfamily/Winged helix DNA-binding domain"/>
    <property type="match status" value="1"/>
</dbReference>
<dbReference type="InterPro" id="IPR005119">
    <property type="entry name" value="LysR_subst-bd"/>
</dbReference>
<dbReference type="InterPro" id="IPR000847">
    <property type="entry name" value="Tscrpt_reg_HTH_LysR"/>
</dbReference>
<dbReference type="InterPro" id="IPR036388">
    <property type="entry name" value="WH-like_DNA-bd_sf"/>
</dbReference>
<dbReference type="InterPro" id="IPR036390">
    <property type="entry name" value="WH_DNA-bd_sf"/>
</dbReference>
<dbReference type="PANTHER" id="PTHR30126">
    <property type="entry name" value="HTH-TYPE TRANSCRIPTIONAL REGULATOR"/>
    <property type="match status" value="1"/>
</dbReference>
<dbReference type="PANTHER" id="PTHR30126:SF40">
    <property type="entry name" value="HTH-TYPE TRANSCRIPTIONAL REGULATOR GLTR"/>
    <property type="match status" value="1"/>
</dbReference>
<dbReference type="Pfam" id="PF00126">
    <property type="entry name" value="HTH_1"/>
    <property type="match status" value="1"/>
</dbReference>
<dbReference type="Pfam" id="PF03466">
    <property type="entry name" value="LysR_substrate"/>
    <property type="match status" value="1"/>
</dbReference>
<dbReference type="PRINTS" id="PR00039">
    <property type="entry name" value="HTHLYSR"/>
</dbReference>
<dbReference type="SUPFAM" id="SSF53850">
    <property type="entry name" value="Periplasmic binding protein-like II"/>
    <property type="match status" value="1"/>
</dbReference>
<dbReference type="SUPFAM" id="SSF46785">
    <property type="entry name" value="Winged helix' DNA-binding domain"/>
    <property type="match status" value="1"/>
</dbReference>
<dbReference type="PROSITE" id="PS50931">
    <property type="entry name" value="HTH_LYSR"/>
    <property type="match status" value="1"/>
</dbReference>
<accession>Q81VJ1</accession>
<accession>Q6I4J0</accession>
<accession>Q6KY92</accession>
<proteinExistence type="inferred from homology"/>
<feature type="chain" id="PRO_0000334138" description="HTH-type transcriptional regulator CzcR">
    <location>
        <begin position="1"/>
        <end position="288"/>
    </location>
</feature>
<feature type="domain" description="HTH lysR-type" evidence="1">
    <location>
        <begin position="1"/>
        <end position="58"/>
    </location>
</feature>
<feature type="DNA-binding region" description="H-T-H motif" evidence="1">
    <location>
        <begin position="18"/>
        <end position="37"/>
    </location>
</feature>
<evidence type="ECO:0000255" key="1">
    <source>
        <dbReference type="PROSITE-ProRule" id="PRU00253"/>
    </source>
</evidence>
<evidence type="ECO:0000305" key="2"/>
<name>CZCR_BACAN</name>
<reference key="1">
    <citation type="journal article" date="2003" name="Nature">
        <title>The genome sequence of Bacillus anthracis Ames and comparison to closely related bacteria.</title>
        <authorList>
            <person name="Read T.D."/>
            <person name="Peterson S.N."/>
            <person name="Tourasse N.J."/>
            <person name="Baillie L.W."/>
            <person name="Paulsen I.T."/>
            <person name="Nelson K.E."/>
            <person name="Tettelin H."/>
            <person name="Fouts D.E."/>
            <person name="Eisen J.A."/>
            <person name="Gill S.R."/>
            <person name="Holtzapple E.K."/>
            <person name="Okstad O.A."/>
            <person name="Helgason E."/>
            <person name="Rilstone J."/>
            <person name="Wu M."/>
            <person name="Kolonay J.F."/>
            <person name="Beanan M.J."/>
            <person name="Dodson R.J."/>
            <person name="Brinkac L.M."/>
            <person name="Gwinn M.L."/>
            <person name="DeBoy R.T."/>
            <person name="Madpu R."/>
            <person name="Daugherty S.C."/>
            <person name="Durkin A.S."/>
            <person name="Haft D.H."/>
            <person name="Nelson W.C."/>
            <person name="Peterson J.D."/>
            <person name="Pop M."/>
            <person name="Khouri H.M."/>
            <person name="Radune D."/>
            <person name="Benton J.L."/>
            <person name="Mahamoud Y."/>
            <person name="Jiang L."/>
            <person name="Hance I.R."/>
            <person name="Weidman J.F."/>
            <person name="Berry K.J."/>
            <person name="Plaut R.D."/>
            <person name="Wolf A.M."/>
            <person name="Watkins K.L."/>
            <person name="Nierman W.C."/>
            <person name="Hazen A."/>
            <person name="Cline R.T."/>
            <person name="Redmond C."/>
            <person name="Thwaite J.E."/>
            <person name="White O."/>
            <person name="Salzberg S.L."/>
            <person name="Thomason B."/>
            <person name="Friedlander A.M."/>
            <person name="Koehler T.M."/>
            <person name="Hanna P.C."/>
            <person name="Kolstoe A.-B."/>
            <person name="Fraser C.M."/>
        </authorList>
    </citation>
    <scope>NUCLEOTIDE SEQUENCE [LARGE SCALE GENOMIC DNA]</scope>
    <source>
        <strain>Ames / isolate Porton</strain>
    </source>
</reference>
<reference key="2">
    <citation type="journal article" date="2009" name="J. Bacteriol.">
        <title>The complete genome sequence of Bacillus anthracis Ames 'Ancestor'.</title>
        <authorList>
            <person name="Ravel J."/>
            <person name="Jiang L."/>
            <person name="Stanley S.T."/>
            <person name="Wilson M.R."/>
            <person name="Decker R.S."/>
            <person name="Read T.D."/>
            <person name="Worsham P."/>
            <person name="Keim P.S."/>
            <person name="Salzberg S.L."/>
            <person name="Fraser-Liggett C.M."/>
            <person name="Rasko D.A."/>
        </authorList>
    </citation>
    <scope>NUCLEOTIDE SEQUENCE [LARGE SCALE GENOMIC DNA]</scope>
    <source>
        <strain>Ames ancestor</strain>
    </source>
</reference>
<reference key="3">
    <citation type="submission" date="2004-01" db="EMBL/GenBank/DDBJ databases">
        <title>Complete genome sequence of Bacillus anthracis Sterne.</title>
        <authorList>
            <person name="Brettin T.S."/>
            <person name="Bruce D."/>
            <person name="Challacombe J.F."/>
            <person name="Gilna P."/>
            <person name="Han C."/>
            <person name="Hill K."/>
            <person name="Hitchcock P."/>
            <person name="Jackson P."/>
            <person name="Keim P."/>
            <person name="Longmire J."/>
            <person name="Lucas S."/>
            <person name="Okinaka R."/>
            <person name="Richardson P."/>
            <person name="Rubin E."/>
            <person name="Tice H."/>
        </authorList>
    </citation>
    <scope>NUCLEOTIDE SEQUENCE [LARGE SCALE GENOMIC DNA]</scope>
    <source>
        <strain>Sterne</strain>
    </source>
</reference>
<sequence>MELRDLQIFQSVADQGSVSSAAKELNYVQSNVTARIKQLENELKTPLFYRHKRGMTLTAEGRKMLVYVNKILQDVDELKQVFLDSETPSGILKIGTVETVSTLPTILSSYYKSYPNVDLSLQAGLTEELIREVLDHQLDGAFISGPIKHPLIEQYDVSTEKLMLVTQNKTFHIEEFTTTPLLVFNQGCGYRSKLERWLKDEGLLPKRIMEFNILETLLNSVALGLGITLVPQSAVHHLSKAGKVHCHAIPEKYGSISTVFIRRKDSYMTNSMRSFLKTIEEHHHINML</sequence>
<gene>
    <name type="primary">czcR</name>
    <name type="ordered locus">BA_0208</name>
    <name type="ordered locus">GBAA_0208</name>
    <name type="ordered locus">BAS0205</name>
</gene>